<accession>A1W8I2</accession>
<name>SYFA_ACISJ</name>
<evidence type="ECO:0000255" key="1">
    <source>
        <dbReference type="HAMAP-Rule" id="MF_00281"/>
    </source>
</evidence>
<feature type="chain" id="PRO_1000059232" description="Phenylalanine--tRNA ligase alpha subunit">
    <location>
        <begin position="1"/>
        <end position="350"/>
    </location>
</feature>
<feature type="binding site" evidence="1">
    <location>
        <position position="271"/>
    </location>
    <ligand>
        <name>Mg(2+)</name>
        <dbReference type="ChEBI" id="CHEBI:18420"/>
        <note>shared with beta subunit</note>
    </ligand>
</feature>
<organism>
    <name type="scientific">Acidovorax sp. (strain JS42)</name>
    <dbReference type="NCBI Taxonomy" id="232721"/>
    <lineage>
        <taxon>Bacteria</taxon>
        <taxon>Pseudomonadati</taxon>
        <taxon>Pseudomonadota</taxon>
        <taxon>Betaproteobacteria</taxon>
        <taxon>Burkholderiales</taxon>
        <taxon>Comamonadaceae</taxon>
        <taxon>Acidovorax</taxon>
    </lineage>
</organism>
<reference key="1">
    <citation type="submission" date="2006-12" db="EMBL/GenBank/DDBJ databases">
        <title>Complete sequence of chromosome 1 of Acidovorax sp. JS42.</title>
        <authorList>
            <person name="Copeland A."/>
            <person name="Lucas S."/>
            <person name="Lapidus A."/>
            <person name="Barry K."/>
            <person name="Detter J.C."/>
            <person name="Glavina del Rio T."/>
            <person name="Dalin E."/>
            <person name="Tice H."/>
            <person name="Pitluck S."/>
            <person name="Chertkov O."/>
            <person name="Brettin T."/>
            <person name="Bruce D."/>
            <person name="Han C."/>
            <person name="Tapia R."/>
            <person name="Gilna P."/>
            <person name="Schmutz J."/>
            <person name="Larimer F."/>
            <person name="Land M."/>
            <person name="Hauser L."/>
            <person name="Kyrpides N."/>
            <person name="Kim E."/>
            <person name="Stahl D."/>
            <person name="Richardson P."/>
        </authorList>
    </citation>
    <scope>NUCLEOTIDE SEQUENCE [LARGE SCALE GENOMIC DNA]</scope>
    <source>
        <strain>JS42</strain>
    </source>
</reference>
<comment type="catalytic activity">
    <reaction evidence="1">
        <text>tRNA(Phe) + L-phenylalanine + ATP = L-phenylalanyl-tRNA(Phe) + AMP + diphosphate + H(+)</text>
        <dbReference type="Rhea" id="RHEA:19413"/>
        <dbReference type="Rhea" id="RHEA-COMP:9668"/>
        <dbReference type="Rhea" id="RHEA-COMP:9699"/>
        <dbReference type="ChEBI" id="CHEBI:15378"/>
        <dbReference type="ChEBI" id="CHEBI:30616"/>
        <dbReference type="ChEBI" id="CHEBI:33019"/>
        <dbReference type="ChEBI" id="CHEBI:58095"/>
        <dbReference type="ChEBI" id="CHEBI:78442"/>
        <dbReference type="ChEBI" id="CHEBI:78531"/>
        <dbReference type="ChEBI" id="CHEBI:456215"/>
        <dbReference type="EC" id="6.1.1.20"/>
    </reaction>
</comment>
<comment type="cofactor">
    <cofactor evidence="1">
        <name>Mg(2+)</name>
        <dbReference type="ChEBI" id="CHEBI:18420"/>
    </cofactor>
    <text evidence="1">Binds 2 magnesium ions per tetramer.</text>
</comment>
<comment type="subunit">
    <text evidence="1">Tetramer of two alpha and two beta subunits.</text>
</comment>
<comment type="subcellular location">
    <subcellularLocation>
        <location evidence="1">Cytoplasm</location>
    </subcellularLocation>
</comment>
<comment type="similarity">
    <text evidence="1">Belongs to the class-II aminoacyl-tRNA synthetase family. Phe-tRNA synthetase alpha subunit type 1 subfamily.</text>
</comment>
<sequence>MNELDSLVTSARESFARSATPAELENAKAQFLGKSGRLTELMKGMAQLSPEEKKTRGAAINVAKQAVEAALAARRQELADAELQAQLKAEALDVTLPGRQRGRGGLHPVSLTLERIERIFGSMGFEVADGPEIETDWFNFTALNTPEDHPARSMHDTFYVEGGTPEAPNLLRTHTSPMQVRYAVQHVKKHRGLIDAGQAMPEIRVIAPGRTYRVDSDATHSPMFHQCEGLWIGENVSFKDLKVVFTDFCKTFFESDDLVLRFRPSFFPFTEPSAEIDIQFQSGPLAGKWLEVAGSGQVHPNVVRNMGLDPERFIGFAFGMGPDRLTMLRYGVNDLRLFFDGDIRFLSQFQ</sequence>
<keyword id="KW-0030">Aminoacyl-tRNA synthetase</keyword>
<keyword id="KW-0067">ATP-binding</keyword>
<keyword id="KW-0963">Cytoplasm</keyword>
<keyword id="KW-0436">Ligase</keyword>
<keyword id="KW-0460">Magnesium</keyword>
<keyword id="KW-0479">Metal-binding</keyword>
<keyword id="KW-0547">Nucleotide-binding</keyword>
<keyword id="KW-0648">Protein biosynthesis</keyword>
<gene>
    <name evidence="1" type="primary">pheS</name>
    <name type="ordered locus">Ajs_2396</name>
</gene>
<dbReference type="EC" id="6.1.1.20" evidence="1"/>
<dbReference type="EMBL" id="CP000539">
    <property type="protein sequence ID" value="ABM42557.1"/>
    <property type="molecule type" value="Genomic_DNA"/>
</dbReference>
<dbReference type="SMR" id="A1W8I2"/>
<dbReference type="STRING" id="232721.Ajs_2396"/>
<dbReference type="KEGG" id="ajs:Ajs_2396"/>
<dbReference type="eggNOG" id="COG0016">
    <property type="taxonomic scope" value="Bacteria"/>
</dbReference>
<dbReference type="HOGENOM" id="CLU_025086_0_1_4"/>
<dbReference type="Proteomes" id="UP000000645">
    <property type="component" value="Chromosome"/>
</dbReference>
<dbReference type="GO" id="GO:0005737">
    <property type="term" value="C:cytoplasm"/>
    <property type="evidence" value="ECO:0007669"/>
    <property type="project" value="UniProtKB-SubCell"/>
</dbReference>
<dbReference type="GO" id="GO:0005524">
    <property type="term" value="F:ATP binding"/>
    <property type="evidence" value="ECO:0007669"/>
    <property type="project" value="UniProtKB-UniRule"/>
</dbReference>
<dbReference type="GO" id="GO:0000287">
    <property type="term" value="F:magnesium ion binding"/>
    <property type="evidence" value="ECO:0007669"/>
    <property type="project" value="UniProtKB-UniRule"/>
</dbReference>
<dbReference type="GO" id="GO:0004826">
    <property type="term" value="F:phenylalanine-tRNA ligase activity"/>
    <property type="evidence" value="ECO:0007669"/>
    <property type="project" value="UniProtKB-UniRule"/>
</dbReference>
<dbReference type="GO" id="GO:0000049">
    <property type="term" value="F:tRNA binding"/>
    <property type="evidence" value="ECO:0007669"/>
    <property type="project" value="InterPro"/>
</dbReference>
<dbReference type="GO" id="GO:0006432">
    <property type="term" value="P:phenylalanyl-tRNA aminoacylation"/>
    <property type="evidence" value="ECO:0007669"/>
    <property type="project" value="UniProtKB-UniRule"/>
</dbReference>
<dbReference type="CDD" id="cd00496">
    <property type="entry name" value="PheRS_alpha_core"/>
    <property type="match status" value="1"/>
</dbReference>
<dbReference type="Gene3D" id="3.30.930.10">
    <property type="entry name" value="Bira Bifunctional Protein, Domain 2"/>
    <property type="match status" value="1"/>
</dbReference>
<dbReference type="HAMAP" id="MF_00281">
    <property type="entry name" value="Phe_tRNA_synth_alpha1"/>
    <property type="match status" value="1"/>
</dbReference>
<dbReference type="InterPro" id="IPR006195">
    <property type="entry name" value="aa-tRNA-synth_II"/>
</dbReference>
<dbReference type="InterPro" id="IPR045864">
    <property type="entry name" value="aa-tRNA-synth_II/BPL/LPL"/>
</dbReference>
<dbReference type="InterPro" id="IPR004529">
    <property type="entry name" value="Phe-tRNA-synth_IIc_asu"/>
</dbReference>
<dbReference type="InterPro" id="IPR004188">
    <property type="entry name" value="Phe-tRNA_ligase_II_N"/>
</dbReference>
<dbReference type="InterPro" id="IPR022911">
    <property type="entry name" value="Phe_tRNA_ligase_alpha1_bac"/>
</dbReference>
<dbReference type="InterPro" id="IPR002319">
    <property type="entry name" value="Phenylalanyl-tRNA_Synthase"/>
</dbReference>
<dbReference type="InterPro" id="IPR010978">
    <property type="entry name" value="tRNA-bd_arm"/>
</dbReference>
<dbReference type="NCBIfam" id="TIGR00468">
    <property type="entry name" value="pheS"/>
    <property type="match status" value="1"/>
</dbReference>
<dbReference type="PANTHER" id="PTHR11538:SF41">
    <property type="entry name" value="PHENYLALANINE--TRNA LIGASE, MITOCHONDRIAL"/>
    <property type="match status" value="1"/>
</dbReference>
<dbReference type="PANTHER" id="PTHR11538">
    <property type="entry name" value="PHENYLALANYL-TRNA SYNTHETASE"/>
    <property type="match status" value="1"/>
</dbReference>
<dbReference type="Pfam" id="PF02912">
    <property type="entry name" value="Phe_tRNA-synt_N"/>
    <property type="match status" value="1"/>
</dbReference>
<dbReference type="Pfam" id="PF01409">
    <property type="entry name" value="tRNA-synt_2d"/>
    <property type="match status" value="1"/>
</dbReference>
<dbReference type="SUPFAM" id="SSF55681">
    <property type="entry name" value="Class II aaRS and biotin synthetases"/>
    <property type="match status" value="1"/>
</dbReference>
<dbReference type="SUPFAM" id="SSF46589">
    <property type="entry name" value="tRNA-binding arm"/>
    <property type="match status" value="1"/>
</dbReference>
<dbReference type="PROSITE" id="PS50862">
    <property type="entry name" value="AA_TRNA_LIGASE_II"/>
    <property type="match status" value="1"/>
</dbReference>
<protein>
    <recommendedName>
        <fullName evidence="1">Phenylalanine--tRNA ligase alpha subunit</fullName>
        <ecNumber evidence="1">6.1.1.20</ecNumber>
    </recommendedName>
    <alternativeName>
        <fullName evidence="1">Phenylalanyl-tRNA synthetase alpha subunit</fullName>
        <shortName evidence="1">PheRS</shortName>
    </alternativeName>
</protein>
<proteinExistence type="inferred from homology"/>